<comment type="function">
    <text evidence="2">May contribute to degradation of proteins cross-linked by transglutaminases by degrading the cross-link between a lysine and a glutamic acid residue. Catalyzes the formation of 5-oxo-L-proline from L-gamma-glutamyl-L-epsilon-lysine.</text>
</comment>
<comment type="catalytic activity">
    <reaction evidence="2">
        <text>epsilon-(gamma-L-glutamyl)-L-lysine = 5-oxo-L-proline + L-lysine</text>
        <dbReference type="Rhea" id="RHEA:16961"/>
        <dbReference type="ChEBI" id="CHEBI:32551"/>
        <dbReference type="ChEBI" id="CHEBI:58402"/>
        <dbReference type="ChEBI" id="CHEBI:133752"/>
        <dbReference type="EC" id="4.3.2.8"/>
    </reaction>
</comment>
<comment type="similarity">
    <text evidence="3">Belongs to the gamma-glutamylcyclotransferase family.</text>
</comment>
<evidence type="ECO:0000250" key="1"/>
<evidence type="ECO:0000250" key="2">
    <source>
        <dbReference type="UniProtKB" id="Q9BVM4"/>
    </source>
</evidence>
<evidence type="ECO:0000305" key="3"/>
<organism>
    <name type="scientific">Xenopus laevis</name>
    <name type="common">African clawed frog</name>
    <dbReference type="NCBI Taxonomy" id="8355"/>
    <lineage>
        <taxon>Eukaryota</taxon>
        <taxon>Metazoa</taxon>
        <taxon>Chordata</taxon>
        <taxon>Craniata</taxon>
        <taxon>Vertebrata</taxon>
        <taxon>Euteleostomi</taxon>
        <taxon>Amphibia</taxon>
        <taxon>Batrachia</taxon>
        <taxon>Anura</taxon>
        <taxon>Pipoidea</taxon>
        <taxon>Pipidae</taxon>
        <taxon>Xenopodinae</taxon>
        <taxon>Xenopus</taxon>
        <taxon>Xenopus</taxon>
    </lineage>
</organism>
<keyword id="KW-0456">Lyase</keyword>
<keyword id="KW-1185">Reference proteome</keyword>
<dbReference type="EC" id="4.3.2.8" evidence="2"/>
<dbReference type="EMBL" id="BC078529">
    <property type="protein sequence ID" value="AAH78529.1"/>
    <property type="molecule type" value="mRNA"/>
</dbReference>
<dbReference type="RefSeq" id="NP_001087302.1">
    <property type="nucleotide sequence ID" value="NM_001093833.1"/>
</dbReference>
<dbReference type="SMR" id="Q66KX0"/>
<dbReference type="DNASU" id="447124"/>
<dbReference type="GeneID" id="447124"/>
<dbReference type="KEGG" id="xla:447124"/>
<dbReference type="AGR" id="Xenbase:XB-GENE-961430"/>
<dbReference type="CTD" id="447124"/>
<dbReference type="Xenbase" id="XB-GENE-961430">
    <property type="gene designation" value="ggact.L"/>
</dbReference>
<dbReference type="OrthoDB" id="113620at2759"/>
<dbReference type="Proteomes" id="UP000186698">
    <property type="component" value="Chromosome 2L"/>
</dbReference>
<dbReference type="Bgee" id="447124">
    <property type="expression patterns" value="Expressed in kidney and 14 other cell types or tissues"/>
</dbReference>
<dbReference type="GO" id="GO:0005829">
    <property type="term" value="C:cytosol"/>
    <property type="evidence" value="ECO:0000318"/>
    <property type="project" value="GO_Central"/>
</dbReference>
<dbReference type="GO" id="GO:0061929">
    <property type="term" value="F:gamma-glutamylaminecyclotransferase activity"/>
    <property type="evidence" value="ECO:0000250"/>
    <property type="project" value="UniProtKB"/>
</dbReference>
<dbReference type="GO" id="GO:0042219">
    <property type="term" value="P:modified amino acid catabolic process"/>
    <property type="evidence" value="ECO:0000250"/>
    <property type="project" value="UniProtKB"/>
</dbReference>
<dbReference type="CDD" id="cd06661">
    <property type="entry name" value="GGCT_like"/>
    <property type="match status" value="1"/>
</dbReference>
<dbReference type="FunFam" id="3.10.490.10:FF:000008">
    <property type="entry name" value="Gamma-glutamylaminecyclotransferase A"/>
    <property type="match status" value="1"/>
</dbReference>
<dbReference type="Gene3D" id="3.10.490.10">
    <property type="entry name" value="Gamma-glutamyl cyclotransferase-like"/>
    <property type="match status" value="1"/>
</dbReference>
<dbReference type="InterPro" id="IPR009288">
    <property type="entry name" value="AIG2-like_dom"/>
</dbReference>
<dbReference type="InterPro" id="IPR039126">
    <property type="entry name" value="GGACT"/>
</dbReference>
<dbReference type="InterPro" id="IPR013024">
    <property type="entry name" value="GGCT-like"/>
</dbReference>
<dbReference type="InterPro" id="IPR036568">
    <property type="entry name" value="GGCT-like_sf"/>
</dbReference>
<dbReference type="PANTHER" id="PTHR12510:SF4">
    <property type="entry name" value="GAMMA-GLUTAMYLAMINECYCLOTRANSFERASE"/>
    <property type="match status" value="1"/>
</dbReference>
<dbReference type="PANTHER" id="PTHR12510">
    <property type="entry name" value="TROPONIN C-AKIN-1 PROTEIN"/>
    <property type="match status" value="1"/>
</dbReference>
<dbReference type="Pfam" id="PF06094">
    <property type="entry name" value="GGACT"/>
    <property type="match status" value="1"/>
</dbReference>
<dbReference type="SUPFAM" id="SSF110857">
    <property type="entry name" value="Gamma-glutamyl cyclotransferase-like"/>
    <property type="match status" value="1"/>
</dbReference>
<accession>Q66KX0</accession>
<gene>
    <name type="primary">ggact</name>
    <name type="synonym">a2ld1</name>
</gene>
<feature type="chain" id="PRO_0000320209" description="Gamma-glutamylaminecyclotransferase">
    <location>
        <begin position="1"/>
        <end position="138"/>
    </location>
</feature>
<feature type="active site" description="Proton acceptor" evidence="1">
    <location>
        <position position="63"/>
    </location>
</feature>
<name>GGACT_XENLA</name>
<sequence>MTCYKHGKAVFKGMGKTVEKYPLVIAEEANIPFLLNIPGTGRRIIGEIYSVDEQLLHFLDDFEGCPNWYQRTPQEIEILEWEGTDDSPDERPAANSIITCFVYSTTCYQPEWLQLPYHKCYDAFGNHGLRYIRHRDII</sequence>
<reference key="1">
    <citation type="submission" date="2004-07" db="EMBL/GenBank/DDBJ databases">
        <authorList>
            <consortium name="NIH - Xenopus Gene Collection (XGC) project"/>
        </authorList>
    </citation>
    <scope>NUCLEOTIDE SEQUENCE [LARGE SCALE MRNA]</scope>
</reference>
<proteinExistence type="evidence at transcript level"/>
<protein>
    <recommendedName>
        <fullName>Gamma-glutamylaminecyclotransferase</fullName>
        <shortName>GGACT</shortName>
        <ecNumber evidence="2">4.3.2.8</ecNumber>
    </recommendedName>
    <alternativeName>
        <fullName>AIG2-like domain-containing protein 1</fullName>
    </alternativeName>
    <alternativeName>
        <fullName>Gamma-glutamylamine cyclotransferase</fullName>
    </alternativeName>
</protein>